<accession>P59775</accession>
<accession>B7U1G0</accession>
<keyword id="KW-0150">Chloroplast</keyword>
<keyword id="KW-0934">Plastid</keyword>
<keyword id="KW-1185">Reference proteome</keyword>
<keyword id="KW-0687">Ribonucleoprotein</keyword>
<keyword id="KW-0689">Ribosomal protein</keyword>
<keyword id="KW-0694">RNA-binding</keyword>
<keyword id="KW-0699">rRNA-binding</keyword>
<name>RR8_CHLRE</name>
<gene>
    <name type="primary">rps8</name>
</gene>
<sequence>MKSHGLINDSIGDMLTRIRNACLAKKSSVSIPFTRLNQNIAQILEQEGFIQTYQVSLDSQDLTIRLKYRSKKIYRGKKKESCITNLKRISKPGLRIYSNHKDILRILGGTGIVIVSTPEGLMTDREARLRGIGGELLCSVW</sequence>
<comment type="function">
    <text evidence="1">One of the primary rRNA binding proteins, it binds directly to 16S rRNA central domain where it helps coordinate assembly of the platform of the 30S subunit.</text>
</comment>
<comment type="subunit">
    <text evidence="1">Part of the 30S ribosomal subunit.</text>
</comment>
<comment type="subcellular location">
    <subcellularLocation>
        <location>Plastid</location>
        <location>Chloroplast</location>
    </subcellularLocation>
</comment>
<comment type="similarity">
    <text evidence="2">Belongs to the universal ribosomal protein uS8 family.</text>
</comment>
<comment type="sequence caution" evidence="2">
    <conflict type="erroneous initiation">
        <sequence resource="EMBL-CDS" id="ACJ50107"/>
    </conflict>
</comment>
<comment type="sequence caution" evidence="2">
    <conflict type="erroneous initiation">
        <sequence resource="EMBL-CDS" id="DAA00920"/>
    </conflict>
</comment>
<reference key="1">
    <citation type="journal article" date="2009" name="BMC Evol. Biol.">
        <title>Nucleotide diversity of the Chlamydomonas reinhardtii plastid genome: addressing the mutational-hazard hypothesis.</title>
        <authorList>
            <person name="Smith D.R."/>
            <person name="Lee R.W."/>
        </authorList>
    </citation>
    <scope>NUCLEOTIDE SEQUENCE [LARGE SCALE GENOMIC DNA]</scope>
    <source>
        <strain>CC-503</strain>
    </source>
</reference>
<reference key="2">
    <citation type="journal article" date="2002" name="Plant Cell">
        <title>The Chlamydomonas reinhardtii plastid chromosome: islands of genes in a sea of repeats.</title>
        <authorList>
            <person name="Maul J.E."/>
            <person name="Lilly J.W."/>
            <person name="Cui L."/>
            <person name="dePamphilis C.W."/>
            <person name="Miller W."/>
            <person name="Harris E.H."/>
            <person name="Stern D.B."/>
        </authorList>
    </citation>
    <scope>IDENTIFICATION</scope>
    <scope>COMPLETE PLASTID GENOME</scope>
</reference>
<geneLocation type="chloroplast"/>
<proteinExistence type="inferred from homology"/>
<organism>
    <name type="scientific">Chlamydomonas reinhardtii</name>
    <name type="common">Chlamydomonas smithii</name>
    <dbReference type="NCBI Taxonomy" id="3055"/>
    <lineage>
        <taxon>Eukaryota</taxon>
        <taxon>Viridiplantae</taxon>
        <taxon>Chlorophyta</taxon>
        <taxon>core chlorophytes</taxon>
        <taxon>Chlorophyceae</taxon>
        <taxon>CS clade</taxon>
        <taxon>Chlamydomonadales</taxon>
        <taxon>Chlamydomonadaceae</taxon>
        <taxon>Chlamydomonas</taxon>
    </lineage>
</organism>
<protein>
    <recommendedName>
        <fullName evidence="2">Small ribosomal subunit protein uS8c</fullName>
    </recommendedName>
    <alternativeName>
        <fullName>30S ribosomal protein S8, chloroplastic</fullName>
    </alternativeName>
</protein>
<evidence type="ECO:0000250" key="1"/>
<evidence type="ECO:0000305" key="2"/>
<dbReference type="EMBL" id="FJ423446">
    <property type="protein sequence ID" value="ACJ50107.1"/>
    <property type="status" value="ALT_INIT"/>
    <property type="molecule type" value="Genomic_DNA"/>
</dbReference>
<dbReference type="EMBL" id="BK000554">
    <property type="protein sequence ID" value="DAA00920.1"/>
    <property type="status" value="ALT_INIT"/>
    <property type="molecule type" value="Genomic_DNA"/>
</dbReference>
<dbReference type="RefSeq" id="NP_958374.2">
    <property type="nucleotide sequence ID" value="NC_005353.1"/>
</dbReference>
<dbReference type="SMR" id="P59775"/>
<dbReference type="FunCoup" id="P59775">
    <property type="interactions" value="116"/>
</dbReference>
<dbReference type="STRING" id="3055.P59775"/>
<dbReference type="PaxDb" id="3055-DAA00920"/>
<dbReference type="GeneID" id="2716952"/>
<dbReference type="KEGG" id="cre:ChreCp017"/>
<dbReference type="eggNOG" id="KOG1754">
    <property type="taxonomic scope" value="Eukaryota"/>
</dbReference>
<dbReference type="HOGENOM" id="CLU_098428_0_2_1"/>
<dbReference type="InParanoid" id="P59775"/>
<dbReference type="Proteomes" id="UP000006906">
    <property type="component" value="Chloroplast"/>
</dbReference>
<dbReference type="GO" id="GO:0009507">
    <property type="term" value="C:chloroplast"/>
    <property type="evidence" value="ECO:0007669"/>
    <property type="project" value="UniProtKB-SubCell"/>
</dbReference>
<dbReference type="GO" id="GO:1990904">
    <property type="term" value="C:ribonucleoprotein complex"/>
    <property type="evidence" value="ECO:0007669"/>
    <property type="project" value="UniProtKB-KW"/>
</dbReference>
<dbReference type="GO" id="GO:0005840">
    <property type="term" value="C:ribosome"/>
    <property type="evidence" value="ECO:0007669"/>
    <property type="project" value="UniProtKB-KW"/>
</dbReference>
<dbReference type="GO" id="GO:0019843">
    <property type="term" value="F:rRNA binding"/>
    <property type="evidence" value="ECO:0007669"/>
    <property type="project" value="UniProtKB-UniRule"/>
</dbReference>
<dbReference type="GO" id="GO:0003735">
    <property type="term" value="F:structural constituent of ribosome"/>
    <property type="evidence" value="ECO:0000318"/>
    <property type="project" value="GO_Central"/>
</dbReference>
<dbReference type="GO" id="GO:0006412">
    <property type="term" value="P:translation"/>
    <property type="evidence" value="ECO:0007669"/>
    <property type="project" value="UniProtKB-UniRule"/>
</dbReference>
<dbReference type="FunFam" id="3.30.1490.10:FF:000001">
    <property type="entry name" value="30S ribosomal protein S8"/>
    <property type="match status" value="1"/>
</dbReference>
<dbReference type="FunFam" id="3.30.1370.30:FF:000011">
    <property type="entry name" value="30S ribosomal protein S8, chloroplastic"/>
    <property type="match status" value="1"/>
</dbReference>
<dbReference type="Gene3D" id="3.30.1370.30">
    <property type="match status" value="1"/>
</dbReference>
<dbReference type="Gene3D" id="3.30.1490.10">
    <property type="match status" value="1"/>
</dbReference>
<dbReference type="HAMAP" id="MF_01302_B">
    <property type="entry name" value="Ribosomal_uS8_B"/>
    <property type="match status" value="1"/>
</dbReference>
<dbReference type="InterPro" id="IPR000630">
    <property type="entry name" value="Ribosomal_uS8"/>
</dbReference>
<dbReference type="InterPro" id="IPR047863">
    <property type="entry name" value="Ribosomal_uS8_CS"/>
</dbReference>
<dbReference type="InterPro" id="IPR035987">
    <property type="entry name" value="Ribosomal_uS8_sf"/>
</dbReference>
<dbReference type="NCBIfam" id="NF001109">
    <property type="entry name" value="PRK00136.1"/>
    <property type="match status" value="1"/>
</dbReference>
<dbReference type="PANTHER" id="PTHR11758">
    <property type="entry name" value="40S RIBOSOMAL PROTEIN S15A"/>
    <property type="match status" value="1"/>
</dbReference>
<dbReference type="Pfam" id="PF00410">
    <property type="entry name" value="Ribosomal_S8"/>
    <property type="match status" value="1"/>
</dbReference>
<dbReference type="SUPFAM" id="SSF56047">
    <property type="entry name" value="Ribosomal protein S8"/>
    <property type="match status" value="1"/>
</dbReference>
<dbReference type="PROSITE" id="PS00053">
    <property type="entry name" value="RIBOSOMAL_S8"/>
    <property type="match status" value="1"/>
</dbReference>
<feature type="chain" id="PRO_0000126566" description="Small ribosomal subunit protein uS8c">
    <location>
        <begin position="1"/>
        <end position="141"/>
    </location>
</feature>